<gene>
    <name type="primary">anxa7</name>
    <name type="synonym">anx7</name>
</gene>
<name>ANXA7_XENLA</name>
<reference key="1">
    <citation type="journal article" date="1996" name="Biochem. J.">
        <title>Novel isoforms of synexin in Xenopus laevis: multiple tandem PGQM repeats distinguish mRNAs in specific adult tissues and embryonic stages.</title>
        <authorList>
            <person name="Srivastava M."/>
            <person name="Zhang-Keck Z.Y."/>
            <person name="Caohuy H."/>
            <person name="McPhie P."/>
            <person name="Pollard H.B."/>
        </authorList>
    </citation>
    <scope>NUCLEOTIDE SEQUENCE [MRNA]</scope>
    <source>
        <tissue>Brain</tissue>
    </source>
</reference>
<comment type="function">
    <text>Calcium/phospholipid-binding protein which promotes membrane fusion and is involved in exocytosis.</text>
</comment>
<comment type="domain">
    <text>A pair of annexin repeats may form one binding site for calcium and phospholipid.</text>
</comment>
<comment type="similarity">
    <text evidence="1 3">Belongs to the annexin family.</text>
</comment>
<sequence>MSYQYPSGFPGYPGYPGGDPSYPPAAQQAFPGGQFPPAAGGGAFPPASGGGNAPPPGGGYPHAGGYPAPGGYPGGMPSYPGAPGFGAPAGGQGYGAPPGAPAYGVPGYGGPGFNAPAGGYGAPNAGGFGVPPAGGYGSPGGAPGYGGFSQPSSQSYGAGGPGQMPGQMPGQMPGQAPSGYPSGPAPAQPTPYAAAMTATQGTIKAAPNFDALSDAEKLRKAMKGFGTDEKPIDVVANRSNDQRQKIQAAFKTAYGKDLIKDLKSELSGNVEELIIALFMPSTYYDAWSLYNAMKGAGTQERVLIEILCTRTNSEIRNIVACYKQEFGREIEKDIRSDTSGHFERLLISIMARGIVDESQNVNMQQAEQDAQRLYQAGEGKLGTDESSFNLVLASRSFPQLKAVAEAYARISKRDLLSVIGREFSGYIEDGLKAVLQCAINRPLFFRDRLCRSMKGAGTDDSTLIRIIVTRSEIDLVQIKQAYVQMYQKSLSAAISSDTSGAYKRMLLAISGH</sequence>
<keyword id="KW-0041">Annexin</keyword>
<keyword id="KW-0106">Calcium</keyword>
<keyword id="KW-0111">Calcium/phospholipid-binding</keyword>
<keyword id="KW-1185">Reference proteome</keyword>
<keyword id="KW-0677">Repeat</keyword>
<dbReference type="EMBL" id="U16365">
    <property type="protein sequence ID" value="AAB18145.1"/>
    <property type="molecule type" value="mRNA"/>
</dbReference>
<dbReference type="PIR" id="S70644">
    <property type="entry name" value="S70644"/>
</dbReference>
<dbReference type="RefSeq" id="NP_001081470.1">
    <property type="nucleotide sequence ID" value="NM_001088001.1"/>
</dbReference>
<dbReference type="SMR" id="Q92125"/>
<dbReference type="GeneID" id="397854"/>
<dbReference type="CTD" id="310"/>
<dbReference type="Proteomes" id="UP000186698">
    <property type="component" value="Unplaced"/>
</dbReference>
<dbReference type="GO" id="GO:0005737">
    <property type="term" value="C:cytoplasm"/>
    <property type="evidence" value="ECO:0000318"/>
    <property type="project" value="GO_Central"/>
</dbReference>
<dbReference type="GO" id="GO:0005634">
    <property type="term" value="C:nucleus"/>
    <property type="evidence" value="ECO:0000318"/>
    <property type="project" value="GO_Central"/>
</dbReference>
<dbReference type="GO" id="GO:0005886">
    <property type="term" value="C:plasma membrane"/>
    <property type="evidence" value="ECO:0000318"/>
    <property type="project" value="GO_Central"/>
</dbReference>
<dbReference type="GO" id="GO:0012506">
    <property type="term" value="C:vesicle membrane"/>
    <property type="evidence" value="ECO:0000318"/>
    <property type="project" value="GO_Central"/>
</dbReference>
<dbReference type="GO" id="GO:0005509">
    <property type="term" value="F:calcium ion binding"/>
    <property type="evidence" value="ECO:0007669"/>
    <property type="project" value="InterPro"/>
</dbReference>
<dbReference type="GO" id="GO:0005544">
    <property type="term" value="F:calcium-dependent phospholipid binding"/>
    <property type="evidence" value="ECO:0000318"/>
    <property type="project" value="GO_Central"/>
</dbReference>
<dbReference type="GO" id="GO:0001786">
    <property type="term" value="F:phosphatidylserine binding"/>
    <property type="evidence" value="ECO:0000318"/>
    <property type="project" value="GO_Central"/>
</dbReference>
<dbReference type="FunFam" id="1.10.220.10:FF:000001">
    <property type="entry name" value="Annexin"/>
    <property type="match status" value="1"/>
</dbReference>
<dbReference type="FunFam" id="1.10.220.10:FF:000002">
    <property type="entry name" value="Annexin"/>
    <property type="match status" value="1"/>
</dbReference>
<dbReference type="FunFam" id="1.10.220.10:FF:000003">
    <property type="entry name" value="Annexin"/>
    <property type="match status" value="1"/>
</dbReference>
<dbReference type="FunFam" id="1.10.220.10:FF:000004">
    <property type="entry name" value="Annexin"/>
    <property type="match status" value="1"/>
</dbReference>
<dbReference type="Gene3D" id="1.10.220.10">
    <property type="entry name" value="Annexin"/>
    <property type="match status" value="4"/>
</dbReference>
<dbReference type="InterPro" id="IPR001464">
    <property type="entry name" value="Annexin"/>
</dbReference>
<dbReference type="InterPro" id="IPR018502">
    <property type="entry name" value="Annexin_repeat"/>
</dbReference>
<dbReference type="InterPro" id="IPR018252">
    <property type="entry name" value="Annexin_repeat_CS"/>
</dbReference>
<dbReference type="InterPro" id="IPR037104">
    <property type="entry name" value="Annexin_sf"/>
</dbReference>
<dbReference type="PANTHER" id="PTHR10502">
    <property type="entry name" value="ANNEXIN"/>
    <property type="match status" value="1"/>
</dbReference>
<dbReference type="PANTHER" id="PTHR10502:SF239">
    <property type="entry name" value="ANNEXIN A7"/>
    <property type="match status" value="1"/>
</dbReference>
<dbReference type="Pfam" id="PF00191">
    <property type="entry name" value="Annexin"/>
    <property type="match status" value="4"/>
</dbReference>
<dbReference type="PRINTS" id="PR00196">
    <property type="entry name" value="ANNEXIN"/>
</dbReference>
<dbReference type="PRINTS" id="PR01871">
    <property type="entry name" value="ANNEXINVII"/>
</dbReference>
<dbReference type="SMART" id="SM00335">
    <property type="entry name" value="ANX"/>
    <property type="match status" value="4"/>
</dbReference>
<dbReference type="SUPFAM" id="SSF47874">
    <property type="entry name" value="Annexin"/>
    <property type="match status" value="1"/>
</dbReference>
<dbReference type="PROSITE" id="PS00223">
    <property type="entry name" value="ANNEXIN_1"/>
    <property type="match status" value="3"/>
</dbReference>
<dbReference type="PROSITE" id="PS51897">
    <property type="entry name" value="ANNEXIN_2"/>
    <property type="match status" value="4"/>
</dbReference>
<protein>
    <recommendedName>
        <fullName>Annexin A7</fullName>
    </recommendedName>
    <alternativeName>
        <fullName>Annexin VII</fullName>
    </alternativeName>
    <alternativeName>
        <fullName>Annexin-7</fullName>
    </alternativeName>
    <alternativeName>
        <fullName>Synexin</fullName>
    </alternativeName>
</protein>
<proteinExistence type="evidence at transcript level"/>
<feature type="chain" id="PRO_0000067501" description="Annexin A7">
    <location>
        <begin position="1"/>
        <end position="512"/>
    </location>
</feature>
<feature type="repeat" description="Annexin 1" evidence="1">
    <location>
        <begin position="209"/>
        <end position="279"/>
    </location>
</feature>
<feature type="repeat" description="Annexin 2" evidence="1">
    <location>
        <begin position="280"/>
        <end position="351"/>
    </location>
</feature>
<feature type="repeat" description="Annexin 3" evidence="1">
    <location>
        <begin position="364"/>
        <end position="436"/>
    </location>
</feature>
<feature type="repeat" description="Annexin 4" evidence="1">
    <location>
        <begin position="440"/>
        <end position="511"/>
    </location>
</feature>
<feature type="region of interest" description="Disordered" evidence="2">
    <location>
        <begin position="14"/>
        <end position="62"/>
    </location>
</feature>
<feature type="region of interest" description="Disordered" evidence="2">
    <location>
        <begin position="146"/>
        <end position="190"/>
    </location>
</feature>
<feature type="compositionally biased region" description="Low complexity" evidence="2">
    <location>
        <begin position="14"/>
        <end position="38"/>
    </location>
</feature>
<feature type="compositionally biased region" description="Gly residues" evidence="2">
    <location>
        <begin position="39"/>
        <end position="52"/>
    </location>
</feature>
<feature type="compositionally biased region" description="Low complexity" evidence="2">
    <location>
        <begin position="164"/>
        <end position="182"/>
    </location>
</feature>
<organism>
    <name type="scientific">Xenopus laevis</name>
    <name type="common">African clawed frog</name>
    <dbReference type="NCBI Taxonomy" id="8355"/>
    <lineage>
        <taxon>Eukaryota</taxon>
        <taxon>Metazoa</taxon>
        <taxon>Chordata</taxon>
        <taxon>Craniata</taxon>
        <taxon>Vertebrata</taxon>
        <taxon>Euteleostomi</taxon>
        <taxon>Amphibia</taxon>
        <taxon>Batrachia</taxon>
        <taxon>Anura</taxon>
        <taxon>Pipoidea</taxon>
        <taxon>Pipidae</taxon>
        <taxon>Xenopodinae</taxon>
        <taxon>Xenopus</taxon>
        <taxon>Xenopus</taxon>
    </lineage>
</organism>
<evidence type="ECO:0000255" key="1">
    <source>
        <dbReference type="PROSITE-ProRule" id="PRU01245"/>
    </source>
</evidence>
<evidence type="ECO:0000256" key="2">
    <source>
        <dbReference type="SAM" id="MobiDB-lite"/>
    </source>
</evidence>
<evidence type="ECO:0000305" key="3"/>
<accession>Q92125</accession>